<comment type="function">
    <text evidence="1">Involved in coproporphyrin-dependent heme b biosynthesis. Catalyzes the insertion of ferrous iron into coproporphyrin III to form Fe-coproporphyrin III.</text>
</comment>
<comment type="catalytic activity">
    <reaction evidence="1">
        <text>Fe-coproporphyrin III + 2 H(+) = coproporphyrin III + Fe(2+)</text>
        <dbReference type="Rhea" id="RHEA:49572"/>
        <dbReference type="ChEBI" id="CHEBI:15378"/>
        <dbReference type="ChEBI" id="CHEBI:29033"/>
        <dbReference type="ChEBI" id="CHEBI:68438"/>
        <dbReference type="ChEBI" id="CHEBI:131725"/>
        <dbReference type="EC" id="4.99.1.9"/>
    </reaction>
    <physiologicalReaction direction="right-to-left" evidence="1">
        <dbReference type="Rhea" id="RHEA:49574"/>
    </physiologicalReaction>
</comment>
<comment type="pathway">
    <text evidence="1">Porphyrin-containing compound metabolism; protoheme biosynthesis.</text>
</comment>
<comment type="subcellular location">
    <subcellularLocation>
        <location evidence="1">Cytoplasm</location>
    </subcellularLocation>
</comment>
<comment type="similarity">
    <text evidence="1 2">Belongs to the ferrochelatase family.</text>
</comment>
<comment type="sequence caution" evidence="2">
    <conflict type="erroneous initiation">
        <sequence resource="EMBL-CDS" id="AAP08056"/>
    </conflict>
</comment>
<protein>
    <recommendedName>
        <fullName evidence="1">Coproporphyrin III ferrochelatase 1</fullName>
        <ecNumber evidence="1">4.99.1.9</ecNumber>
    </recommendedName>
</protein>
<feature type="chain" id="PRO_0000175106" description="Coproporphyrin III ferrochelatase 1">
    <location>
        <begin position="1"/>
        <end position="311"/>
    </location>
</feature>
<feature type="binding site" description="axial binding residue" evidence="1">
    <location>
        <position position="12"/>
    </location>
    <ligand>
        <name>Fe-coproporphyrin III</name>
        <dbReference type="ChEBI" id="CHEBI:68438"/>
    </ligand>
    <ligandPart>
        <name>Fe</name>
        <dbReference type="ChEBI" id="CHEBI:18248"/>
    </ligandPart>
</feature>
<feature type="binding site" evidence="1">
    <location>
        <position position="29"/>
    </location>
    <ligand>
        <name>Fe-coproporphyrin III</name>
        <dbReference type="ChEBI" id="CHEBI:68438"/>
    </ligand>
</feature>
<feature type="binding site" evidence="1">
    <location>
        <begin position="45"/>
        <end position="46"/>
    </location>
    <ligand>
        <name>Fe-coproporphyrin III</name>
        <dbReference type="ChEBI" id="CHEBI:68438"/>
    </ligand>
</feature>
<feature type="binding site" evidence="1">
    <location>
        <position position="53"/>
    </location>
    <ligand>
        <name>Fe-coproporphyrin III</name>
        <dbReference type="ChEBI" id="CHEBI:68438"/>
    </ligand>
</feature>
<feature type="binding site" evidence="1">
    <location>
        <position position="124"/>
    </location>
    <ligand>
        <name>Fe-coproporphyrin III</name>
        <dbReference type="ChEBI" id="CHEBI:68438"/>
    </ligand>
</feature>
<feature type="binding site" evidence="1">
    <location>
        <position position="182"/>
    </location>
    <ligand>
        <name>Fe(2+)</name>
        <dbReference type="ChEBI" id="CHEBI:29033"/>
    </ligand>
</feature>
<feature type="binding site" evidence="1">
    <location>
        <position position="263"/>
    </location>
    <ligand>
        <name>Fe(2+)</name>
        <dbReference type="ChEBI" id="CHEBI:29033"/>
    </ligand>
</feature>
<sequence length="311" mass="35302">MKKKIGLLVMAYGTPYKEEDIERYYTHIRRGRKPSPEMLEDLTERYRAIGGISPLATITLEQAKKLEKRLNEVQDEVEYHMYLGLKHIEPFIEDAVKDMHNDGIQDAIALVLAPHYSTFSVKSYVGRAQEEAEKLGNLTIHGIDSWYKEPKFIQYWVDAVKGIYNGMSDAEREKAVLIVSAHSLPEKIIAMGDPYPDQLNETADYIARGAEVANYAVGWQSAGNTPDPWIGPDVQDLTRELNEKHGYTSFVYAPVGFVAEHLEVLYDNDFECKVVTDEIGAKYYRPEMPNASDAFIDCLTDVVLKKKESVL</sequence>
<accession>Q81GW5</accession>
<dbReference type="EC" id="4.99.1.9" evidence="1"/>
<dbReference type="EMBL" id="AE016877">
    <property type="protein sequence ID" value="AAP08056.1"/>
    <property type="status" value="ALT_INIT"/>
    <property type="molecule type" value="Genomic_DNA"/>
</dbReference>
<dbReference type="RefSeq" id="NP_830855.1">
    <property type="nucleotide sequence ID" value="NC_004722.1"/>
</dbReference>
<dbReference type="SMR" id="Q81GW5"/>
<dbReference type="STRING" id="226900.BC_1069"/>
<dbReference type="KEGG" id="bce:BC1069"/>
<dbReference type="PATRIC" id="fig|226900.8.peg.1027"/>
<dbReference type="HOGENOM" id="CLU_018884_2_1_9"/>
<dbReference type="OrthoDB" id="9776380at2"/>
<dbReference type="UniPathway" id="UPA00252"/>
<dbReference type="Proteomes" id="UP000001417">
    <property type="component" value="Chromosome"/>
</dbReference>
<dbReference type="GO" id="GO:0005737">
    <property type="term" value="C:cytoplasm"/>
    <property type="evidence" value="ECO:0007669"/>
    <property type="project" value="UniProtKB-SubCell"/>
</dbReference>
<dbReference type="GO" id="GO:0004325">
    <property type="term" value="F:ferrochelatase activity"/>
    <property type="evidence" value="ECO:0000318"/>
    <property type="project" value="GO_Central"/>
</dbReference>
<dbReference type="GO" id="GO:0046872">
    <property type="term" value="F:metal ion binding"/>
    <property type="evidence" value="ECO:0007669"/>
    <property type="project" value="UniProtKB-KW"/>
</dbReference>
<dbReference type="GO" id="GO:0006783">
    <property type="term" value="P:heme biosynthetic process"/>
    <property type="evidence" value="ECO:0000318"/>
    <property type="project" value="GO_Central"/>
</dbReference>
<dbReference type="CDD" id="cd00419">
    <property type="entry name" value="Ferrochelatase_C"/>
    <property type="match status" value="1"/>
</dbReference>
<dbReference type="CDD" id="cd03411">
    <property type="entry name" value="Ferrochelatase_N"/>
    <property type="match status" value="1"/>
</dbReference>
<dbReference type="FunFam" id="3.40.50.1400:FF:000009">
    <property type="entry name" value="Ferrochelatase"/>
    <property type="match status" value="1"/>
</dbReference>
<dbReference type="Gene3D" id="3.40.50.1400">
    <property type="match status" value="2"/>
</dbReference>
<dbReference type="HAMAP" id="MF_00323">
    <property type="entry name" value="Ferrochelatase"/>
    <property type="match status" value="1"/>
</dbReference>
<dbReference type="InterPro" id="IPR001015">
    <property type="entry name" value="Ferrochelatase"/>
</dbReference>
<dbReference type="InterPro" id="IPR019772">
    <property type="entry name" value="Ferrochelatase_AS"/>
</dbReference>
<dbReference type="InterPro" id="IPR033644">
    <property type="entry name" value="Ferrochelatase_C"/>
</dbReference>
<dbReference type="InterPro" id="IPR033659">
    <property type="entry name" value="Ferrochelatase_N"/>
</dbReference>
<dbReference type="NCBIfam" id="TIGR00109">
    <property type="entry name" value="hemH"/>
    <property type="match status" value="1"/>
</dbReference>
<dbReference type="NCBIfam" id="NF009095">
    <property type="entry name" value="PRK12435.1"/>
    <property type="match status" value="1"/>
</dbReference>
<dbReference type="PANTHER" id="PTHR11108">
    <property type="entry name" value="FERROCHELATASE"/>
    <property type="match status" value="1"/>
</dbReference>
<dbReference type="PANTHER" id="PTHR11108:SF1">
    <property type="entry name" value="FERROCHELATASE, MITOCHONDRIAL"/>
    <property type="match status" value="1"/>
</dbReference>
<dbReference type="Pfam" id="PF00762">
    <property type="entry name" value="Ferrochelatase"/>
    <property type="match status" value="1"/>
</dbReference>
<dbReference type="SUPFAM" id="SSF53800">
    <property type="entry name" value="Chelatase"/>
    <property type="match status" value="1"/>
</dbReference>
<dbReference type="PROSITE" id="PS00534">
    <property type="entry name" value="FERROCHELATASE"/>
    <property type="match status" value="1"/>
</dbReference>
<organism>
    <name type="scientific">Bacillus cereus (strain ATCC 14579 / DSM 31 / CCUG 7414 / JCM 2152 / NBRC 15305 / NCIMB 9373 / NCTC 2599 / NRRL B-3711)</name>
    <dbReference type="NCBI Taxonomy" id="226900"/>
    <lineage>
        <taxon>Bacteria</taxon>
        <taxon>Bacillati</taxon>
        <taxon>Bacillota</taxon>
        <taxon>Bacilli</taxon>
        <taxon>Bacillales</taxon>
        <taxon>Bacillaceae</taxon>
        <taxon>Bacillus</taxon>
        <taxon>Bacillus cereus group</taxon>
    </lineage>
</organism>
<proteinExistence type="inferred from homology"/>
<reference key="1">
    <citation type="journal article" date="2003" name="Nature">
        <title>Genome sequence of Bacillus cereus and comparative analysis with Bacillus anthracis.</title>
        <authorList>
            <person name="Ivanova N."/>
            <person name="Sorokin A."/>
            <person name="Anderson I."/>
            <person name="Galleron N."/>
            <person name="Candelon B."/>
            <person name="Kapatral V."/>
            <person name="Bhattacharyya A."/>
            <person name="Reznik G."/>
            <person name="Mikhailova N."/>
            <person name="Lapidus A."/>
            <person name="Chu L."/>
            <person name="Mazur M."/>
            <person name="Goltsman E."/>
            <person name="Larsen N."/>
            <person name="D'Souza M."/>
            <person name="Walunas T."/>
            <person name="Grechkin Y."/>
            <person name="Pusch G."/>
            <person name="Haselkorn R."/>
            <person name="Fonstein M."/>
            <person name="Ehrlich S.D."/>
            <person name="Overbeek R."/>
            <person name="Kyrpides N.C."/>
        </authorList>
    </citation>
    <scope>NUCLEOTIDE SEQUENCE [LARGE SCALE GENOMIC DNA]</scope>
    <source>
        <strain>ATCC 14579 / DSM 31 / CCUG 7414 / JCM 2152 / NBRC 15305 / NCIMB 9373 / NCTC 2599 / NRRL B-3711</strain>
    </source>
</reference>
<keyword id="KW-0963">Cytoplasm</keyword>
<keyword id="KW-0350">Heme biosynthesis</keyword>
<keyword id="KW-0408">Iron</keyword>
<keyword id="KW-0456">Lyase</keyword>
<keyword id="KW-0479">Metal-binding</keyword>
<keyword id="KW-0627">Porphyrin biosynthesis</keyword>
<keyword id="KW-1185">Reference proteome</keyword>
<name>CPFC1_BACCR</name>
<evidence type="ECO:0000255" key="1">
    <source>
        <dbReference type="HAMAP-Rule" id="MF_00323"/>
    </source>
</evidence>
<evidence type="ECO:0000305" key="2"/>
<gene>
    <name evidence="1" type="primary">cpfC1</name>
    <name type="synonym">hemH1</name>
    <name type="ordered locus">BC_1069</name>
</gene>